<keyword id="KW-0998">Cell outer membrane</keyword>
<keyword id="KW-0472">Membrane</keyword>
<keyword id="KW-1185">Reference proteome</keyword>
<keyword id="KW-0732">Signal</keyword>
<keyword id="KW-0802">TPR repeat</keyword>
<keyword id="KW-0812">Transmembrane</keyword>
<keyword id="KW-1134">Transmembrane beta strand</keyword>
<name>SLAM_PASMU</name>
<evidence type="ECO:0000250" key="1">
    <source>
        <dbReference type="UniProtKB" id="Q9K165"/>
    </source>
</evidence>
<evidence type="ECO:0000255" key="2"/>
<evidence type="ECO:0000255" key="3">
    <source>
        <dbReference type="PROSITE-ProRule" id="PRU00339"/>
    </source>
</evidence>
<evidence type="ECO:0000256" key="4">
    <source>
        <dbReference type="SAM" id="MobiDB-lite"/>
    </source>
</evidence>
<evidence type="ECO:0000269" key="5">
    <source>
    </source>
</evidence>
<evidence type="ECO:0000303" key="6">
    <source>
    </source>
</evidence>
<evidence type="ECO:0000305" key="7"/>
<evidence type="ECO:0000305" key="8">
    <source>
    </source>
</evidence>
<dbReference type="EMBL" id="AE004439">
    <property type="protein sequence ID" value="AAK03599.1"/>
    <property type="molecule type" value="Genomic_DNA"/>
</dbReference>
<dbReference type="STRING" id="272843.PM1515"/>
<dbReference type="EnsemblBacteria" id="AAK03599">
    <property type="protein sequence ID" value="AAK03599"/>
    <property type="gene ID" value="PM1515"/>
</dbReference>
<dbReference type="KEGG" id="pmu:PM1515"/>
<dbReference type="HOGENOM" id="CLU_034927_1_0_6"/>
<dbReference type="Proteomes" id="UP000000809">
    <property type="component" value="Chromosome"/>
</dbReference>
<dbReference type="GO" id="GO:0009279">
    <property type="term" value="C:cell outer membrane"/>
    <property type="evidence" value="ECO:0007669"/>
    <property type="project" value="UniProtKB-SubCell"/>
</dbReference>
<dbReference type="Gene3D" id="1.25.40.10">
    <property type="entry name" value="Tetratricopeptide repeat domain"/>
    <property type="match status" value="1"/>
</dbReference>
<dbReference type="InterPro" id="IPR007655">
    <property type="entry name" value="Slam_C_b-barrel"/>
</dbReference>
<dbReference type="InterPro" id="IPR011990">
    <property type="entry name" value="TPR-like_helical_dom_sf"/>
</dbReference>
<dbReference type="Pfam" id="PF04575">
    <property type="entry name" value="SlipAM"/>
    <property type="match status" value="1"/>
</dbReference>
<dbReference type="Pfam" id="PF24575">
    <property type="entry name" value="TPR_Slam"/>
    <property type="match status" value="1"/>
</dbReference>
<dbReference type="SUPFAM" id="SSF48452">
    <property type="entry name" value="TPR-like"/>
    <property type="match status" value="1"/>
</dbReference>
<comment type="function">
    <text evidence="5">Required for correct export to the cell surface of some cell outer membrane lipoproteins (tested with PM1514) upon heterologous expression in E.coli and probably also in Pasteurella.</text>
</comment>
<comment type="subcellular location">
    <subcellularLocation>
        <location evidence="8">Cell outer membrane</location>
        <topology evidence="2">Multi-pass membrane protein</topology>
    </subcellularLocation>
</comment>
<comment type="domain">
    <text evidence="1">Consists of a soluble N-terminal domain and C-terminal probable beta-barrel in the outer membrane with 14 predicted beta-strands.</text>
</comment>
<comment type="similarity">
    <text evidence="7">Belongs to the Slam family.</text>
</comment>
<feature type="signal peptide" evidence="2">
    <location>
        <begin position="1"/>
        <end position="32"/>
    </location>
</feature>
<feature type="chain" id="PRO_0000450809" description="Surface lipoprotein assembly modifier" evidence="2">
    <location>
        <begin position="33"/>
        <end position="509"/>
    </location>
</feature>
<feature type="transmembrane region" description="Beta stranded" evidence="2">
    <location>
        <begin position="206"/>
        <end position="216"/>
    </location>
</feature>
<feature type="transmembrane region" description="Beta stranded" evidence="2">
    <location>
        <begin position="245"/>
        <end position="256"/>
    </location>
</feature>
<feature type="transmembrane region" description="Beta stranded" evidence="2">
    <location>
        <begin position="261"/>
        <end position="270"/>
    </location>
</feature>
<feature type="transmembrane region" description="Beta stranded" evidence="2">
    <location>
        <begin position="284"/>
        <end position="294"/>
    </location>
</feature>
<feature type="transmembrane region" description="Beta stranded" evidence="2">
    <location>
        <begin position="298"/>
        <end position="308"/>
    </location>
</feature>
<feature type="transmembrane region" description="Beta stranded" evidence="2">
    <location>
        <begin position="331"/>
        <end position="341"/>
    </location>
</feature>
<feature type="transmembrane region" description="Beta stranded" evidence="2">
    <location>
        <begin position="345"/>
        <end position="355"/>
    </location>
</feature>
<feature type="transmembrane region" description="Beta stranded" evidence="2">
    <location>
        <begin position="371"/>
        <end position="381"/>
    </location>
</feature>
<feature type="transmembrane region" description="Beta stranded" evidence="2">
    <location>
        <begin position="386"/>
        <end position="395"/>
    </location>
</feature>
<feature type="transmembrane region" description="Beta stranded" evidence="2">
    <location>
        <begin position="408"/>
        <end position="417"/>
    </location>
</feature>
<feature type="transmembrane region" description="Beta stranded" evidence="2">
    <location>
        <begin position="423"/>
        <end position="432"/>
    </location>
</feature>
<feature type="transmembrane region" description="Beta stranded" evidence="2">
    <location>
        <begin position="461"/>
        <end position="470"/>
    </location>
</feature>
<feature type="transmembrane region" description="Beta stranded" evidence="2">
    <location>
        <begin position="476"/>
        <end position="485"/>
    </location>
</feature>
<feature type="transmembrane region" description="Beta stranded" evidence="2">
    <location>
        <begin position="499"/>
        <end position="509"/>
    </location>
</feature>
<feature type="repeat" description="TPR" evidence="3">
    <location>
        <begin position="120"/>
        <end position="153"/>
    </location>
</feature>
<feature type="region of interest" description="N-terminal domain" evidence="1">
    <location>
        <begin position="33"/>
        <end position="204"/>
    </location>
</feature>
<feature type="region of interest" description="Disordered" evidence="4">
    <location>
        <begin position="43"/>
        <end position="72"/>
    </location>
</feature>
<feature type="region of interest" description="C-terminal probable beta barrel" evidence="1">
    <location>
        <begin position="205"/>
        <end position="509"/>
    </location>
</feature>
<feature type="compositionally biased region" description="Polar residues" evidence="4">
    <location>
        <begin position="46"/>
        <end position="57"/>
    </location>
</feature>
<protein>
    <recommendedName>
        <fullName evidence="6">Surface lipoprotein assembly modifier</fullName>
        <shortName evidence="6">Slam</shortName>
    </recommendedName>
</protein>
<reference key="1">
    <citation type="journal article" date="2001" name="Proc. Natl. Acad. Sci. U.S.A.">
        <title>Complete genomic sequence of Pasteurella multocida Pm70.</title>
        <authorList>
            <person name="May B.J."/>
            <person name="Zhang Q."/>
            <person name="Li L.L."/>
            <person name="Paustian M.L."/>
            <person name="Whittam T.S."/>
            <person name="Kapur V."/>
        </authorList>
    </citation>
    <scope>NUCLEOTIDE SEQUENCE [LARGE SCALE GENOMIC DNA]</scope>
    <source>
        <strain>Pm70</strain>
    </source>
</reference>
<reference key="2">
    <citation type="journal article" date="2017" name="Front. Cell. Infect. Microbiol.">
        <title>Identification of a Large Family of Slam-Dependent Surface Lipoproteins in Gram-Negative Bacteria.</title>
        <authorList>
            <person name="Hooda Y."/>
            <person name="Lai C.C.L."/>
            <person name="Moraes T.F."/>
        </authorList>
    </citation>
    <scope>FUNCTION</scope>
    <scope>SUBCELLULAR LOCATION</scope>
    <source>
        <strain>Pm70</strain>
    </source>
</reference>
<sequence>MNLMINLKPLTFLPFFGRLVFLSGVIYNTAWANTVIPVDNSRPDETFSQTSPKQHLFSQKPKPTEPTSSASSQQISLTIEQLASRPDLVLRALIPALKNNDMRGVEILLPIYAKQSPDPFLLKWAQAVVARKQGKLNESVRLYRQIIAEKPNLQPARLQLAIALTQNRENEAAKAQFNQLRSENLPAPLLTLIDSYIDTINQRDSWNVYGGVNYLHENNVNNAPPKGTKAEGFTPSSQPEKAHGLSYFINLSKNWSLAHGFFTEFSADINGKYYWDNHKYDEFSTRLNLGGGYRNAKTEVKLMPFVEQFWYVGGENATKDARTLHRYSKSSGINLDVDYWLTPNWKISTVLEYTEQRYIQPQRQNSNGNSYSISNTLIYMPNSQQFWFVGLDYYQKNTRLKAYAFERQGIRLGWGQEWPKGISTRLQTSYATRTYRAPSAEKNMIFAPSFFKVVQKNHEYGVNFTIWHRSLHWLGITPKITWAYQKTTSNNPFSEYDRNRIYLTFSKTF</sequence>
<gene>
    <name type="ordered locus">PM1515</name>
</gene>
<accession>Q9CKU1</accession>
<proteinExistence type="inferred from homology"/>
<organism>
    <name type="scientific">Pasteurella multocida (strain Pm70)</name>
    <dbReference type="NCBI Taxonomy" id="272843"/>
    <lineage>
        <taxon>Bacteria</taxon>
        <taxon>Pseudomonadati</taxon>
        <taxon>Pseudomonadota</taxon>
        <taxon>Gammaproteobacteria</taxon>
        <taxon>Pasteurellales</taxon>
        <taxon>Pasteurellaceae</taxon>
        <taxon>Pasteurella</taxon>
    </lineage>
</organism>